<accession>O55017</accession>
<accession>Q60609</accession>
<name>CAC1B_MOUSE</name>
<gene>
    <name type="primary">Cacna1b</name>
    <name type="synonym">Cach5</name>
    <name type="synonym">Cacnl1a5</name>
    <name type="synonym">Cchn1a</name>
</gene>
<evidence type="ECO:0000250" key="1"/>
<evidence type="ECO:0000250" key="2">
    <source>
        <dbReference type="UniProtKB" id="P15381"/>
    </source>
</evidence>
<evidence type="ECO:0000250" key="3">
    <source>
        <dbReference type="UniProtKB" id="Q00975"/>
    </source>
</evidence>
<evidence type="ECO:0000250" key="4">
    <source>
        <dbReference type="UniProtKB" id="Q02294"/>
    </source>
</evidence>
<evidence type="ECO:0000255" key="5"/>
<evidence type="ECO:0000255" key="6">
    <source>
        <dbReference type="PROSITE-ProRule" id="PRU00448"/>
    </source>
</evidence>
<evidence type="ECO:0000256" key="7">
    <source>
        <dbReference type="SAM" id="MobiDB-lite"/>
    </source>
</evidence>
<evidence type="ECO:0000269" key="8">
    <source>
    </source>
</evidence>
<evidence type="ECO:0000269" key="9">
    <source>
    </source>
</evidence>
<evidence type="ECO:0000269" key="10">
    <source>
    </source>
</evidence>
<evidence type="ECO:0000303" key="11">
    <source>
    </source>
</evidence>
<evidence type="ECO:0000305" key="12"/>
<evidence type="ECO:0007744" key="13">
    <source>
    </source>
</evidence>
<evidence type="ECO:0007744" key="14">
    <source>
    </source>
</evidence>
<evidence type="ECO:0007744" key="15">
    <source>
    </source>
</evidence>
<comment type="function">
    <text evidence="4">Voltage-sensitive calcium channels (VSCC) mediate the entry of calcium ions into excitable cells and are also involved in a variety of calcium-dependent processes, including muscle contraction, hormone or neurotransmitter release, gene expression, cell motility, cell division and cell death. This alpha-1B subunit gives rise to N-type calcium currents. N-type calcium channels belong to the 'high-voltage activated' (HVA) group. They are involved in pain signaling. Calcium channels containing alpha-1B subunit may play a role in directed migration of immature neurons. Mediates Ca(2+) release probability at hippocampal neuronal soma and synaptic terminals (By similarity).</text>
</comment>
<comment type="catalytic activity">
    <reaction evidence="4">
        <text>Ca(2+)(in) = Ca(2+)(out)</text>
        <dbReference type="Rhea" id="RHEA:29671"/>
        <dbReference type="ChEBI" id="CHEBI:29108"/>
    </reaction>
</comment>
<comment type="activity regulation">
    <text evidence="3 4">Is specifically blocked by omega-conotoxin GVIA (By similarity). Is specifically blocked by omega-conotoxin MVIIA (ziconotide) (By similarity). Is insensitive to dihydropyridines (DHP).</text>
</comment>
<comment type="subunit">
    <text evidence="8 9">Multisubunit complex consisting of alpha-1, alpha-2, beta and delta subunits in a 1:1:1:1 ratio. The channel activity is directed by the pore-forming and voltage-sensitive alpha-1 subunit. In many cases, this subunit is sufficient to generate voltage-sensitive calcium channel activity. The auxiliary subunits beta and alpha-2/delta linked by a disulfide bridge regulate the channel activity. Interacts with RIMS1 (PubMed:11438518). Interacts with FMR1 (via C-terminus); this interaction induces a decrease in the number of presynaptic functional CACNA1B channels at the cell surface (PubMed:24709664).</text>
</comment>
<comment type="subcellular location">
    <subcellularLocation>
        <location evidence="3">Membrane</location>
        <topology evidence="5">Multi-pass membrane protein</topology>
    </subcellularLocation>
</comment>
<comment type="alternative products">
    <event type="alternative splicing"/>
    <isoform>
        <id>O55017-1</id>
        <name>NB1</name>
        <sequence type="displayed"/>
    </isoform>
    <isoform>
        <id>O55017-2</id>
        <name>NB2</name>
        <sequence type="described" ref="VSP_000883"/>
    </isoform>
</comment>
<comment type="tissue specificity">
    <text>Widespread expression throughout the brain. Highest levels in pyramidal cell layers C1, C2 and C3 of the hippocampus, in the dentate gyrus, in the cortex layers 2 et 4, in the subiculum and the habenula.</text>
</comment>
<comment type="domain">
    <text>Each of the four internal repeats contains five hydrophobic transmembrane segments (S1, S2, S3, S5, S6) and one positively charged transmembrane segment (S4). S4 segments probably represent the voltage-sensor and are characterized by a series of positively charged amino acids at every third position.</text>
</comment>
<comment type="PTM">
    <text evidence="4">Phosphorylated in vitro by CaM-kinase II, PKA, PKC and CGPK.</text>
</comment>
<comment type="similarity">
    <text evidence="12">Belongs to the calcium channel alpha-1 subunit (TC 1.A.1.11) family. CACNA1B subfamily.</text>
</comment>
<comment type="sequence caution" evidence="12">
    <conflict type="frameshift">
        <sequence resource="EMBL-CDS" id="AAB60437"/>
    </conflict>
</comment>
<proteinExistence type="evidence at protein level"/>
<keyword id="KW-0025">Alternative splicing</keyword>
<keyword id="KW-0067">ATP-binding</keyword>
<keyword id="KW-0106">Calcium</keyword>
<keyword id="KW-0107">Calcium channel</keyword>
<keyword id="KW-0109">Calcium transport</keyword>
<keyword id="KW-1015">Disulfide bond</keyword>
<keyword id="KW-0325">Glycoprotein</keyword>
<keyword id="KW-0407">Ion channel</keyword>
<keyword id="KW-0406">Ion transport</keyword>
<keyword id="KW-0472">Membrane</keyword>
<keyword id="KW-0479">Metal-binding</keyword>
<keyword id="KW-0488">Methylation</keyword>
<keyword id="KW-0547">Nucleotide-binding</keyword>
<keyword id="KW-0597">Phosphoprotein</keyword>
<keyword id="KW-1185">Reference proteome</keyword>
<keyword id="KW-0677">Repeat</keyword>
<keyword id="KW-0812">Transmembrane</keyword>
<keyword id="KW-1133">Transmembrane helix</keyword>
<keyword id="KW-0813">Transport</keyword>
<keyword id="KW-0851">Voltage-gated channel</keyword>
<dbReference type="EMBL" id="AF042317">
    <property type="protein sequence ID" value="AAB97840.1"/>
    <property type="molecule type" value="mRNA"/>
</dbReference>
<dbReference type="EMBL" id="U04999">
    <property type="protein sequence ID" value="AAB60437.1"/>
    <property type="status" value="ALT_FRAME"/>
    <property type="molecule type" value="mRNA"/>
</dbReference>
<dbReference type="CCDS" id="CCDS38065.1">
    <molecule id="O55017-1"/>
</dbReference>
<dbReference type="PIR" id="S41080">
    <property type="entry name" value="S41080"/>
</dbReference>
<dbReference type="RefSeq" id="NP_001035993.1">
    <molecule id="O55017-1"/>
    <property type="nucleotide sequence ID" value="NM_001042528.3"/>
</dbReference>
<dbReference type="BMRB" id="O55017"/>
<dbReference type="SMR" id="O55017"/>
<dbReference type="BioGRID" id="198431">
    <property type="interactions" value="20"/>
</dbReference>
<dbReference type="FunCoup" id="O55017">
    <property type="interactions" value="941"/>
</dbReference>
<dbReference type="IntAct" id="O55017">
    <property type="interactions" value="2"/>
</dbReference>
<dbReference type="MINT" id="O55017"/>
<dbReference type="STRING" id="10090.ENSMUSP00000037416"/>
<dbReference type="ChEMBL" id="CHEMBL3637936"/>
<dbReference type="TCDB" id="1.A.1.11.9">
    <property type="family name" value="the voltage-gated ion channel (vic) superfamily"/>
</dbReference>
<dbReference type="GlyCosmos" id="O55017">
    <property type="glycosylation" value="3 sites, No reported glycans"/>
</dbReference>
<dbReference type="GlyGen" id="O55017">
    <property type="glycosylation" value="7 sites, 1 N-linked glycan (1 site), 1 O-linked glycan (2 sites)"/>
</dbReference>
<dbReference type="iPTMnet" id="O55017"/>
<dbReference type="PhosphoSitePlus" id="O55017"/>
<dbReference type="SwissPalm" id="O55017"/>
<dbReference type="PaxDb" id="10090-ENSMUSP00000037416"/>
<dbReference type="ProteomicsDB" id="273879">
    <molecule id="O55017-1"/>
</dbReference>
<dbReference type="ProteomicsDB" id="273880">
    <molecule id="O55017-2"/>
</dbReference>
<dbReference type="Antibodypedia" id="32538">
    <property type="antibodies" value="142 antibodies from 28 providers"/>
</dbReference>
<dbReference type="DNASU" id="12287"/>
<dbReference type="Ensembl" id="ENSMUST00000041342.12">
    <molecule id="O55017-1"/>
    <property type="protein sequence ID" value="ENSMUSP00000037416.6"/>
    <property type="gene ID" value="ENSMUSG00000004113.20"/>
</dbReference>
<dbReference type="GeneID" id="12287"/>
<dbReference type="KEGG" id="mmu:12287"/>
<dbReference type="UCSC" id="uc008ipe.2">
    <molecule id="O55017-1"/>
    <property type="organism name" value="mouse"/>
</dbReference>
<dbReference type="AGR" id="MGI:88296"/>
<dbReference type="CTD" id="774"/>
<dbReference type="MGI" id="MGI:88296">
    <property type="gene designation" value="Cacna1b"/>
</dbReference>
<dbReference type="VEuPathDB" id="HostDB:ENSMUSG00000004113"/>
<dbReference type="eggNOG" id="KOG2301">
    <property type="taxonomic scope" value="Eukaryota"/>
</dbReference>
<dbReference type="GeneTree" id="ENSGT00940000155275"/>
<dbReference type="InParanoid" id="O55017"/>
<dbReference type="OMA" id="EGGRKHH"/>
<dbReference type="TreeFam" id="TF312805"/>
<dbReference type="Reactome" id="R-MMU-112308">
    <property type="pathway name" value="Presynaptic depolarization and calcium channel opening"/>
</dbReference>
<dbReference type="BioGRID-ORCS" id="12287">
    <property type="hits" value="2 hits in 79 CRISPR screens"/>
</dbReference>
<dbReference type="CD-CODE" id="05A797AF">
    <property type="entry name" value="Presynaptic clusters"/>
</dbReference>
<dbReference type="CD-CODE" id="CE726F99">
    <property type="entry name" value="Postsynaptic density"/>
</dbReference>
<dbReference type="ChiTaRS" id="Cacna1b">
    <property type="organism name" value="mouse"/>
</dbReference>
<dbReference type="PRO" id="PR:O55017"/>
<dbReference type="Proteomes" id="UP000000589">
    <property type="component" value="Chromosome 2"/>
</dbReference>
<dbReference type="RNAct" id="O55017">
    <property type="molecule type" value="protein"/>
</dbReference>
<dbReference type="Bgee" id="ENSMUSG00000004113">
    <property type="expression patterns" value="Expressed in supraoptic nucleus and 134 other cell types or tissues"/>
</dbReference>
<dbReference type="ExpressionAtlas" id="O55017">
    <property type="expression patterns" value="baseline and differential"/>
</dbReference>
<dbReference type="GO" id="GO:0030425">
    <property type="term" value="C:dendrite"/>
    <property type="evidence" value="ECO:0000314"/>
    <property type="project" value="MGI"/>
</dbReference>
<dbReference type="GO" id="GO:0016020">
    <property type="term" value="C:membrane"/>
    <property type="evidence" value="ECO:0000314"/>
    <property type="project" value="MGI"/>
</dbReference>
<dbReference type="GO" id="GO:0043025">
    <property type="term" value="C:neuronal cell body"/>
    <property type="evidence" value="ECO:0000314"/>
    <property type="project" value="MGI"/>
</dbReference>
<dbReference type="GO" id="GO:0048786">
    <property type="term" value="C:presynaptic active zone"/>
    <property type="evidence" value="ECO:0000314"/>
    <property type="project" value="SynGO"/>
</dbReference>
<dbReference type="GO" id="GO:0005891">
    <property type="term" value="C:voltage-gated calcium channel complex"/>
    <property type="evidence" value="ECO:0000314"/>
    <property type="project" value="MGI"/>
</dbReference>
<dbReference type="GO" id="GO:0005524">
    <property type="term" value="F:ATP binding"/>
    <property type="evidence" value="ECO:0007669"/>
    <property type="project" value="UniProtKB-KW"/>
</dbReference>
<dbReference type="GO" id="GO:0005509">
    <property type="term" value="F:calcium ion binding"/>
    <property type="evidence" value="ECO:0007669"/>
    <property type="project" value="InterPro"/>
</dbReference>
<dbReference type="GO" id="GO:0008331">
    <property type="term" value="F:high voltage-gated calcium channel activity"/>
    <property type="evidence" value="ECO:0000314"/>
    <property type="project" value="MGI"/>
</dbReference>
<dbReference type="GO" id="GO:0005245">
    <property type="term" value="F:voltage-gated calcium channel activity"/>
    <property type="evidence" value="ECO:0000315"/>
    <property type="project" value="MGI"/>
</dbReference>
<dbReference type="GO" id="GO:0070588">
    <property type="term" value="P:calcium ion transmembrane transport"/>
    <property type="evidence" value="ECO:0000315"/>
    <property type="project" value="MGI"/>
</dbReference>
<dbReference type="GO" id="GO:0006816">
    <property type="term" value="P:calcium ion transport"/>
    <property type="evidence" value="ECO:0000315"/>
    <property type="project" value="MGI"/>
</dbReference>
<dbReference type="GO" id="GO:0051649">
    <property type="term" value="P:establishment of localization in cell"/>
    <property type="evidence" value="ECO:0000315"/>
    <property type="project" value="MGI"/>
</dbReference>
<dbReference type="GO" id="GO:0007626">
    <property type="term" value="P:locomotory behavior"/>
    <property type="evidence" value="ECO:0000315"/>
    <property type="project" value="MGI"/>
</dbReference>
<dbReference type="GO" id="GO:0007269">
    <property type="term" value="P:neurotransmitter secretion"/>
    <property type="evidence" value="ECO:0000315"/>
    <property type="project" value="MGI"/>
</dbReference>
<dbReference type="GO" id="GO:0008217">
    <property type="term" value="P:regulation of blood pressure"/>
    <property type="evidence" value="ECO:0000315"/>
    <property type="project" value="MGI"/>
</dbReference>
<dbReference type="GO" id="GO:0051924">
    <property type="term" value="P:regulation of calcium ion transport"/>
    <property type="evidence" value="ECO:0000315"/>
    <property type="project" value="MGI"/>
</dbReference>
<dbReference type="GO" id="GO:0008016">
    <property type="term" value="P:regulation of heart contraction"/>
    <property type="evidence" value="ECO:0000315"/>
    <property type="project" value="MGI"/>
</dbReference>
<dbReference type="GO" id="GO:0048265">
    <property type="term" value="P:response to pain"/>
    <property type="evidence" value="ECO:0000315"/>
    <property type="project" value="MGI"/>
</dbReference>
<dbReference type="FunFam" id="1.20.120.350:FF:000001">
    <property type="entry name" value="Voltage-dependent L-type calcium channel subunit alpha"/>
    <property type="match status" value="1"/>
</dbReference>
<dbReference type="FunFam" id="1.10.238.10:FF:000063">
    <property type="entry name" value="Voltage-dependent N-type calcium channel subunit alpha"/>
    <property type="match status" value="1"/>
</dbReference>
<dbReference type="FunFam" id="1.20.120.350:FF:000011">
    <property type="entry name" value="Voltage-dependent N-type calcium channel subunit alpha"/>
    <property type="match status" value="1"/>
</dbReference>
<dbReference type="FunFam" id="1.20.120.350:FF:000013">
    <property type="entry name" value="Voltage-dependent N-type calcium channel subunit alpha"/>
    <property type="match status" value="1"/>
</dbReference>
<dbReference type="FunFam" id="1.20.120.350:FF:000015">
    <property type="entry name" value="Voltage-dependent N-type calcium channel subunit alpha"/>
    <property type="match status" value="1"/>
</dbReference>
<dbReference type="FunFam" id="1.10.287.70:FF:000023">
    <property type="entry name" value="Voltage-dependent R-type calcium channel subunit alpha"/>
    <property type="match status" value="1"/>
</dbReference>
<dbReference type="FunFam" id="1.10.287.70:FF:000025">
    <property type="entry name" value="Voltage-dependent R-type calcium channel subunit alpha"/>
    <property type="match status" value="1"/>
</dbReference>
<dbReference type="Gene3D" id="1.10.287.70">
    <property type="match status" value="4"/>
</dbReference>
<dbReference type="Gene3D" id="6.10.250.2180">
    <property type="match status" value="1"/>
</dbReference>
<dbReference type="Gene3D" id="6.10.250.2500">
    <property type="match status" value="1"/>
</dbReference>
<dbReference type="Gene3D" id="1.20.120.350">
    <property type="entry name" value="Voltage-gated potassium channels. Chain C"/>
    <property type="match status" value="4"/>
</dbReference>
<dbReference type="InterPro" id="IPR002048">
    <property type="entry name" value="EF_hand_dom"/>
</dbReference>
<dbReference type="InterPro" id="IPR031649">
    <property type="entry name" value="GPHH_dom"/>
</dbReference>
<dbReference type="InterPro" id="IPR005821">
    <property type="entry name" value="Ion_trans_dom"/>
</dbReference>
<dbReference type="InterPro" id="IPR014873">
    <property type="entry name" value="VDCC_a1su_IQ"/>
</dbReference>
<dbReference type="InterPro" id="IPR050599">
    <property type="entry name" value="VDCC_alpha-1_subunit"/>
</dbReference>
<dbReference type="InterPro" id="IPR005447">
    <property type="entry name" value="VDCC_N_a1su"/>
</dbReference>
<dbReference type="InterPro" id="IPR002077">
    <property type="entry name" value="VDCCAlpha1"/>
</dbReference>
<dbReference type="InterPro" id="IPR027359">
    <property type="entry name" value="Volt_channel_dom_sf"/>
</dbReference>
<dbReference type="PANTHER" id="PTHR45628">
    <property type="entry name" value="VOLTAGE-DEPENDENT CALCIUM CHANNEL TYPE A SUBUNIT ALPHA-1"/>
    <property type="match status" value="1"/>
</dbReference>
<dbReference type="PANTHER" id="PTHR45628:SF6">
    <property type="entry name" value="VOLTAGE-DEPENDENT N-TYPE CALCIUM CHANNEL SUBUNIT ALPHA-1B"/>
    <property type="match status" value="1"/>
</dbReference>
<dbReference type="Pfam" id="PF08763">
    <property type="entry name" value="Ca_chan_IQ"/>
    <property type="match status" value="1"/>
</dbReference>
<dbReference type="Pfam" id="PF16905">
    <property type="entry name" value="GPHH"/>
    <property type="match status" value="1"/>
</dbReference>
<dbReference type="Pfam" id="PF00520">
    <property type="entry name" value="Ion_trans"/>
    <property type="match status" value="4"/>
</dbReference>
<dbReference type="PRINTS" id="PR00167">
    <property type="entry name" value="CACHANNEL"/>
</dbReference>
<dbReference type="PRINTS" id="PR01631">
    <property type="entry name" value="NVDCCALPHA1"/>
</dbReference>
<dbReference type="SMART" id="SM01062">
    <property type="entry name" value="Ca_chan_IQ"/>
    <property type="match status" value="1"/>
</dbReference>
<dbReference type="SUPFAM" id="SSF81324">
    <property type="entry name" value="Voltage-gated potassium channels"/>
    <property type="match status" value="4"/>
</dbReference>
<dbReference type="PROSITE" id="PS50222">
    <property type="entry name" value="EF_HAND_2"/>
    <property type="match status" value="1"/>
</dbReference>
<reference key="1">
    <citation type="submission" date="1998-01" db="EMBL/GenBank/DDBJ databases">
        <title>Nucleotide sequence polymorphism of mouse alpha1 B.</title>
        <authorList>
            <person name="Hong T."/>
            <person name="Birnbaumer L."/>
        </authorList>
    </citation>
    <scope>NUCLEOTIDE SEQUENCE [MRNA]</scope>
    <source>
        <strain>C57BL/6J</strain>
        <tissue>Brain</tissue>
    </source>
</reference>
<reference key="2">
    <citation type="journal article" date="1994" name="FEBS Lett.">
        <title>Molecular cloning of a murine N-type calcium channel alpha 1 subunit. Evidence for isoforms, brain distribution, and chromosomal localization.</title>
        <authorList>
            <person name="Coppola T."/>
            <person name="Waldmann R."/>
            <person name="Borsotto M."/>
            <person name="Heurteaux C."/>
            <person name="Romey G."/>
            <person name="Mattei M.-G."/>
            <person name="Lazdunski M."/>
        </authorList>
    </citation>
    <scope>NUCLEOTIDE SEQUENCE [MRNA] (ISOFORMS NB1 AND NB2)</scope>
    <scope>VARIANT ALA-414 INS</scope>
    <source>
        <tissue>Neuroblastoma</tissue>
    </source>
</reference>
<reference key="3">
    <citation type="journal article" date="2001" name="J. Biol. Chem.">
        <title>Direct interaction of the Rab3 effector RIM with Ca2+ channels, SNAP-25, and synaptotagmin.</title>
        <authorList>
            <person name="Coppola T."/>
            <person name="Magnin-Luethi S."/>
            <person name="Perret-Menoud V."/>
            <person name="Gattesco S."/>
            <person name="Schiavo G."/>
            <person name="Regazzi R."/>
        </authorList>
    </citation>
    <scope>INTERACTION WITH RIMS1</scope>
    <source>
        <tissue>Brain</tissue>
    </source>
</reference>
<reference key="4">
    <citation type="journal article" date="2006" name="Mol. Cell. Proteomics">
        <title>Comprehensive identification of phosphorylation sites in postsynaptic density preparations.</title>
        <authorList>
            <person name="Trinidad J.C."/>
            <person name="Specht C.G."/>
            <person name="Thalhammer A."/>
            <person name="Schoepfer R."/>
            <person name="Burlingame A.L."/>
        </authorList>
    </citation>
    <scope>PHOSPHORYLATION [LARGE SCALE ANALYSIS] AT SER-783</scope>
    <scope>IDENTIFICATION BY MASS SPECTROMETRY [LARGE SCALE ANALYSIS]</scope>
    <source>
        <tissue>Brain</tissue>
    </source>
</reference>
<reference key="5">
    <citation type="journal article" date="2007" name="Mol. Cell. Proteomics">
        <title>Qualitative and quantitative analyses of protein phosphorylation in naive and stimulated mouse synaptosomal preparations.</title>
        <authorList>
            <person name="Munton R.P."/>
            <person name="Tweedie-Cullen R."/>
            <person name="Livingstone-Zatchej M."/>
            <person name="Weinandy F."/>
            <person name="Waidelich M."/>
            <person name="Longo D."/>
            <person name="Gehrig P."/>
            <person name="Potthast F."/>
            <person name="Rutishauser D."/>
            <person name="Gerrits B."/>
            <person name="Panse C."/>
            <person name="Schlapbach R."/>
            <person name="Mansuy I.M."/>
        </authorList>
    </citation>
    <scope>IDENTIFICATION BY MASS SPECTROMETRY [LARGE SCALE ANALYSIS]</scope>
    <source>
        <tissue>Brain cortex</tissue>
    </source>
</reference>
<reference key="6">
    <citation type="journal article" date="2010" name="Cell">
        <title>A tissue-specific atlas of mouse protein phosphorylation and expression.</title>
        <authorList>
            <person name="Huttlin E.L."/>
            <person name="Jedrychowski M.P."/>
            <person name="Elias J.E."/>
            <person name="Goswami T."/>
            <person name="Rad R."/>
            <person name="Beausoleil S.A."/>
            <person name="Villen J."/>
            <person name="Haas W."/>
            <person name="Sowa M.E."/>
            <person name="Gygi S.P."/>
        </authorList>
    </citation>
    <scope>PHOSPHORYLATION [LARGE SCALE ANALYSIS] AT SER-411; SER-745; SER-748; SER-783; SER-1058; SER-2056; SER-2212; SER-2221 AND SER-2244</scope>
    <scope>IDENTIFICATION BY MASS SPECTROMETRY [LARGE SCALE ANALYSIS]</scope>
    <source>
        <tissue>Brain</tissue>
    </source>
</reference>
<reference key="7">
    <citation type="journal article" date="2014" name="Mol. Cell. Proteomics">
        <title>Immunoaffinity enrichment and mass spectrometry analysis of protein methylation.</title>
        <authorList>
            <person name="Guo A."/>
            <person name="Gu H."/>
            <person name="Zhou J."/>
            <person name="Mulhern D."/>
            <person name="Wang Y."/>
            <person name="Lee K.A."/>
            <person name="Yang V."/>
            <person name="Aguiar M."/>
            <person name="Kornhauser J."/>
            <person name="Jia X."/>
            <person name="Ren J."/>
            <person name="Beausoleil S.A."/>
            <person name="Silva J.C."/>
            <person name="Vemulapalli V."/>
            <person name="Bedford M.T."/>
            <person name="Comb M.J."/>
        </authorList>
    </citation>
    <scope>METHYLATION [LARGE SCALE ANALYSIS] AT ARG-22</scope>
    <scope>IDENTIFICATION BY MASS SPECTROMETRY [LARGE SCALE ANALYSIS]</scope>
    <source>
        <tissue>Brain</tissue>
    </source>
</reference>
<reference key="8">
    <citation type="journal article" date="2014" name="Nat. Commun.">
        <title>Fragile X mental retardation protein controls synaptic vesicle exocytosis by modulating N-type calcium channel density.</title>
        <authorList>
            <person name="Ferron L."/>
            <person name="Nieto-Rostro M."/>
            <person name="Cassidy J.S."/>
            <person name="Dolphin A.C."/>
        </authorList>
    </citation>
    <scope>INTERACTION WITH FMR1</scope>
</reference>
<sequence length="2327" mass="261481">MVRFGDELGGRYGGTGGGERARGGGAGGAGGPGQGGLPPGQRVLYKQSIAQRARTMALYNPIPVKQNCFTVNRSLFVFSEDNVVRKYAKRITEWPPFEYMILATIIANCIVLALEQHLPDGDKTPMSERLDDTEPYFIGIFCFEAGIKIIALGFVFHKGSYLRNGWNVMDFVVVLTGILATAGTDFDLRTLRAVRVLRPLKLVSGIPSLQVVLKSIMKAMVPLLQIGLLLFFAILMFAIIGLEFYMGKFHKACFPNSTDTEPVGDFPCGKDPPARQCDGDTECREYWPGPNFGITNFDNILFAILTVFQCITMEGWTDILYNTNDAAGNTWNWLYFIPLIIIGSFFMLNLVLGVLSGEFAKERERVENRRAFLKLRRQQQIERELNGYLEWIFKAEEVMLAEEDKNAEEKSPLDVLKRAATKKSRNDLIHAEEGEDRFVDLCAVGSPFARASLKSGKTESSSYFRRKEKMFRFFIRRMVKAQSFYWVVLCVVALNTLCVAMVHYNQPQRLTTALYFAEFVFLGLFLTEMSLKMYGLGPRSYFRSSFNCFDFGVIVGSIFEVVWAAIKPGTSFGISVLRALRLLRIFKVTKYWNSLRNLVVSLLNSMKSIISLLFLLFLFIVVFALLGMQLFGGQFNFQDETPTTNFDTFPAAILTVFQILTGEDWNAVMYHGIESQGGVSKGMFSSFYFIVLTLFGNYTLLNVFLAIAVDNLANAQELTKDEEEMEEAANQKLALQKAKEVAEVSPMSAANISIAARQQNSAKARSVWEQRASQLRLQNLRASCEALYSEMDPEERLRYASTRHVRPDMKTHMDRPLVVEPGRDGLRGPVGSKSKPEGTEATESADLPRRHHRHRDRDKTSATAPAGGEQDRTESTETGAREERARPRRSHSKETPGADTQVRCERSRRHHRRGSPEEATEREPRRHRAHRHAQDSSKEGTAPVLVPKGERRARHRGPRTGPREAENNEEPTRRHRARHKVPPTLQPPEREAAEKESNAVEGDKETRNHQPKEPHCDLEAIAVTGVGPLHMLPSTCLQKVDEQPEDADNQRNVTRMGSQPSDPSTTVHVPVTLTGPPGETPVVPSGNMNLEGQAEGKKEAEADDVLRRGPRPIVPYSSMFCLSPTNLLRRFCHYIVTMRYFEMVILVVIALSSIALAAEDPVRTDSFRNNALKYMDYIFTGVFTFEMVIKMIDLGLLLHPGAYFRDLWNILDFIVVSGALVAFAFSSFMGGSKGKDINTIKSLRVLRVLRPLKTIKRLPKLKAVFDCVVNSLKNVLNILIVYMLFMFIFAVIAVQLFKGKFFYCTDESKELERDCRGQYLDYEKEEVEAQPRQWKKYDFHYDNVLWALLTLFTVSTGEGWPMVLKHSVDATYEEQGPSPGFRMELSIFYVVYFVVFPFFFVNIFVALIIITFQEQGDKVMSECSLEKNERACIDFAISAKPLTRYMPQNKQSFQYKTWTFVVSPPFEYFIMAMIALNTVVLMMKFYDAPYEYELMLKCLNIVFTSMFSMECILKIIAFGVLNYFRDAWNVFDFVTVLGSITDILVTEIANNFINLSFLRLFRAARLIKLLRQGYTIRILLWTFVQSFKALPYVCLLIAMLFFIYAIIGMQVFGNIALDDDTSINRHNNFRTFLQALMLLFRSATGEAWHEIMLSCLGNRACDPHANASECGSDFAYFYFVSFIFLCSFLMLNLFVAVIMDNFEYLTRDSSILGPHHLDEFIRVWAEYDPAACGRISYNDMFEMLKHMSPPLGLGKKCPARVAYKRLVRMNMPISNEDMTVHFTSTLMALIRTALEIKLAPAGTKQHQCDAELRKEISSVWANLPQKTLDLLVPPHKPDEMTVGKVYAALMIFDFYKQNKTTRDQTHQAPGGLSQMGPVSLFHPLKATLEQTQPAVLRGARVFLRQKSATSLSNGGAIQTQESGIKESLSWGTQRTQDALYEARAPLERGHSAEIPVGQSGTLAVDVQMQNMTLRGPDGEPQPGLESQGRAASMPRLAAETQPAPNASPMKRSISTLAPRPHGTQLCSTVLDRPPPSQASHHHHHRCHRRRDKKQRSLEKGPSLSVDPEGAPSTAAGPGLPHGEGSTACRRDRKQERGRSQERRQPSSSSSEKQRFYSCDRFGSREPPQLMPSLSSHPTSPTAALEPAPHPQGSGSVNGSPLMSTSGASTPGRGGRRQLPQTPLTPRPSITYKTANSSPVHFAEGQSGLPAFSPGRLSRGLSEHNALLQKEPLSQPLAPGSRIGSDPYLGQRLDSEASAHTLPEDTLTFEEAVATNSGRSSRTSYVSSLTSQSHPLRRVPNGYHCTLGLSTGVRARHSYHHPDQDHWC</sequence>
<protein>
    <recommendedName>
        <fullName>Voltage-dependent N-type calcium channel subunit alpha-1B</fullName>
    </recommendedName>
    <alternativeName>
        <fullName>Brain calcium channel III</fullName>
        <shortName>BIII</shortName>
    </alternativeName>
    <alternativeName>
        <fullName>Calcium channel, L type, alpha-1 polypeptide isoform 5</fullName>
    </alternativeName>
    <alternativeName>
        <fullName>Voltage-gated calcium channel subunit alpha Cav2.2</fullName>
    </alternativeName>
</protein>
<feature type="chain" id="PRO_0000053922" description="Voltage-dependent N-type calcium channel subunit alpha-1B">
    <location>
        <begin position="1"/>
        <end position="2327"/>
    </location>
</feature>
<feature type="topological domain" description="Cytoplasmic" evidence="3">
    <location>
        <begin position="1"/>
        <end position="90"/>
    </location>
</feature>
<feature type="transmembrane region" description="Helical; Name=S1 of repeat I" evidence="3">
    <location>
        <begin position="91"/>
        <end position="114"/>
    </location>
</feature>
<feature type="topological domain" description="Extracellular" evidence="3">
    <location>
        <begin position="115"/>
        <end position="131"/>
    </location>
</feature>
<feature type="transmembrane region" description="Helical; Name=S2 of repeat I" evidence="3">
    <location>
        <begin position="132"/>
        <end position="152"/>
    </location>
</feature>
<feature type="topological domain" description="Cytoplasmic" evidence="3">
    <location>
        <begin position="153"/>
        <end position="163"/>
    </location>
</feature>
<feature type="transmembrane region" description="Helical; Name=S3 of repeat I" evidence="3">
    <location>
        <begin position="164"/>
        <end position="182"/>
    </location>
</feature>
<feature type="topological domain" description="Extracellular" evidence="3">
    <location>
        <begin position="183"/>
        <end position="187"/>
    </location>
</feature>
<feature type="transmembrane region" description="Helical; Name=S4 of repeat I" evidence="3">
    <location>
        <begin position="188"/>
        <end position="211"/>
    </location>
</feature>
<feature type="topological domain" description="Cytoplasmic" evidence="3">
    <location>
        <begin position="212"/>
        <end position="221"/>
    </location>
</feature>
<feature type="transmembrane region" description="Helical; Name=S5 of repeat I" evidence="3">
    <location>
        <begin position="222"/>
        <end position="244"/>
    </location>
</feature>
<feature type="topological domain" description="Extracellular" evidence="3">
    <location>
        <begin position="245"/>
        <end position="331"/>
    </location>
</feature>
<feature type="transmembrane region" description="Helical; Name=S6 of repeat I" evidence="3">
    <location>
        <begin position="332"/>
        <end position="356"/>
    </location>
</feature>
<feature type="topological domain" description="Cytoplasmic" evidence="3">
    <location>
        <begin position="357"/>
        <end position="482"/>
    </location>
</feature>
<feature type="transmembrane region" description="Helical; Name=S1 of repeat II" evidence="3">
    <location>
        <begin position="483"/>
        <end position="501"/>
    </location>
</feature>
<feature type="topological domain" description="Extracellular" evidence="3">
    <location>
        <begin position="502"/>
        <end position="511"/>
    </location>
</feature>
<feature type="transmembrane region" description="Helical; Name=S2 of repeat II" evidence="3">
    <location>
        <begin position="512"/>
        <end position="534"/>
    </location>
</feature>
<feature type="topological domain" description="Cytoplasmic" evidence="3">
    <location>
        <begin position="535"/>
        <end position="544"/>
    </location>
</feature>
<feature type="transmembrane region" description="Helical; Name=S3 of repeat II" evidence="3">
    <location>
        <begin position="545"/>
        <end position="566"/>
    </location>
</feature>
<feature type="topological domain" description="Extracellular" evidence="3">
    <location>
        <begin position="567"/>
        <end position="573"/>
    </location>
</feature>
<feature type="transmembrane region" description="Helical; Name=S4 of repeat II" evidence="3">
    <location>
        <begin position="574"/>
        <end position="586"/>
    </location>
</feature>
<feature type="topological domain" description="Cytoplasmic" evidence="3">
    <location>
        <begin position="587"/>
        <end position="604"/>
    </location>
</feature>
<feature type="transmembrane region" description="Helical; Name=S5 of repeat II" evidence="3">
    <location>
        <begin position="605"/>
        <end position="630"/>
    </location>
</feature>
<feature type="topological domain" description="Extracellular" evidence="3">
    <location>
        <begin position="631"/>
        <end position="682"/>
    </location>
</feature>
<feature type="transmembrane region" description="Helical; Name=S6 of repeat II" evidence="3">
    <location>
        <begin position="683"/>
        <end position="709"/>
    </location>
</feature>
<feature type="topological domain" description="Cytoplasmic" evidence="3">
    <location>
        <begin position="710"/>
        <end position="1140"/>
    </location>
</feature>
<feature type="transmembrane region" description="Helical; Name=S1 of repeat III" evidence="3">
    <location>
        <begin position="1141"/>
        <end position="1159"/>
    </location>
</feature>
<feature type="topological domain" description="Extracellular" evidence="3">
    <location>
        <begin position="1160"/>
        <end position="1167"/>
    </location>
</feature>
<feature type="transmembrane region" description="Helical; Name=S2 of repeat III" evidence="3">
    <location>
        <begin position="1168"/>
        <end position="1192"/>
    </location>
</feature>
<feature type="topological domain" description="Cytoplasmic" evidence="3">
    <location>
        <begin position="1193"/>
        <end position="1206"/>
    </location>
</feature>
<feature type="transmembrane region" description="Helical; Name=S3 of repeat III" evidence="3">
    <location>
        <begin position="1207"/>
        <end position="1231"/>
    </location>
</feature>
<feature type="topological domain" description="Extracellular" evidence="3">
    <location>
        <begin position="1232"/>
        <end position="1237"/>
    </location>
</feature>
<feature type="transmembrane region" description="Helical; Name=S4 of repeat III" evidence="3">
    <location>
        <begin position="1238"/>
        <end position="1258"/>
    </location>
</feature>
<feature type="topological domain" description="Cytoplasmic" evidence="3">
    <location>
        <begin position="1259"/>
        <end position="1276"/>
    </location>
</feature>
<feature type="transmembrane region" description="Helical; Name=S5 of repeat III" evidence="3">
    <location>
        <begin position="1277"/>
        <end position="1296"/>
    </location>
</feature>
<feature type="topological domain" description="Extracellular" evidence="3">
    <location>
        <begin position="1297"/>
        <end position="1383"/>
    </location>
</feature>
<feature type="transmembrane region" description="Helical; Name=S6 of repeat III" evidence="3">
    <location>
        <begin position="1384"/>
        <end position="1409"/>
    </location>
</feature>
<feature type="topological domain" description="Cytoplasmic" evidence="3">
    <location>
        <begin position="1410"/>
        <end position="1464"/>
    </location>
</feature>
<feature type="transmembrane region" description="Helical; Name=S1 of repeat IV" evidence="3">
    <location>
        <begin position="1465"/>
        <end position="1483"/>
    </location>
</feature>
<feature type="topological domain" description="Extracellular" evidence="3">
    <location>
        <begin position="1484"/>
        <end position="1491"/>
    </location>
</feature>
<feature type="transmembrane region" description="Helical; Name=S2 of repeat IV" evidence="3">
    <location>
        <begin position="1492"/>
        <end position="1516"/>
    </location>
</feature>
<feature type="topological domain" description="Cytoplasmic" evidence="3">
    <location>
        <begin position="1517"/>
        <end position="1526"/>
    </location>
</feature>
<feature type="transmembrane region" description="Helical; Name=S3 of repeat IV" evidence="3">
    <location>
        <begin position="1527"/>
        <end position="1548"/>
    </location>
</feature>
<feature type="topological domain" description="Extracellular" evidence="3">
    <location>
        <begin position="1549"/>
        <end position="1554"/>
    </location>
</feature>
<feature type="transmembrane region" description="Helical; Name=S4 of repeat IV" evidence="3">
    <location>
        <begin position="1555"/>
        <end position="1573"/>
    </location>
</feature>
<feature type="topological domain" description="Cytoplasmic" evidence="3">
    <location>
        <begin position="1574"/>
        <end position="1592"/>
    </location>
</feature>
<feature type="transmembrane region" description="Helical; Name=S5 of repeat IV" evidence="3">
    <location>
        <begin position="1593"/>
        <end position="1612"/>
    </location>
</feature>
<feature type="topological domain" description="Extracellular" evidence="3">
    <location>
        <begin position="1613"/>
        <end position="1674"/>
    </location>
</feature>
<feature type="transmembrane region" description="Helical; Name=S6 of repeat IV" evidence="3">
    <location>
        <begin position="1675"/>
        <end position="1698"/>
    </location>
</feature>
<feature type="topological domain" description="Cytoplasmic" evidence="3">
    <location>
        <begin position="1699"/>
        <end position="2327"/>
    </location>
</feature>
<feature type="repeat" description="I">
    <location>
        <begin position="82"/>
        <end position="359"/>
    </location>
</feature>
<feature type="repeat" description="II">
    <location>
        <begin position="468"/>
        <end position="712"/>
    </location>
</feature>
<feature type="repeat" description="III">
    <location>
        <begin position="1126"/>
        <end position="1412"/>
    </location>
</feature>
<feature type="repeat" description="IV">
    <location>
        <begin position="1449"/>
        <end position="1702"/>
    </location>
</feature>
<feature type="domain" description="EF-hand" evidence="6">
    <location>
        <begin position="1715"/>
        <end position="1750"/>
    </location>
</feature>
<feature type="region of interest" description="Disordered" evidence="7">
    <location>
        <begin position="1"/>
        <end position="37"/>
    </location>
</feature>
<feature type="region of interest" description="Binding to the beta subunit" evidence="1">
    <location>
        <begin position="379"/>
        <end position="396"/>
    </location>
</feature>
<feature type="region of interest" description="Disordered" evidence="7">
    <location>
        <begin position="802"/>
        <end position="1015"/>
    </location>
</feature>
<feature type="region of interest" description="Disordered" evidence="7">
    <location>
        <begin position="1042"/>
        <end position="1066"/>
    </location>
</feature>
<feature type="region of interest" description="Disordered" evidence="7">
    <location>
        <begin position="1972"/>
        <end position="2193"/>
    </location>
</feature>
<feature type="region of interest" description="Disordered" evidence="7">
    <location>
        <begin position="2230"/>
        <end position="2249"/>
    </location>
</feature>
<feature type="region of interest" description="Disordered" evidence="7">
    <location>
        <begin position="2273"/>
        <end position="2292"/>
    </location>
</feature>
<feature type="compositionally biased region" description="Gly residues" evidence="7">
    <location>
        <begin position="10"/>
        <end position="37"/>
    </location>
</feature>
<feature type="compositionally biased region" description="Basic and acidic residues" evidence="7">
    <location>
        <begin position="805"/>
        <end position="826"/>
    </location>
</feature>
<feature type="compositionally biased region" description="Basic and acidic residues" evidence="7">
    <location>
        <begin position="869"/>
        <end position="885"/>
    </location>
</feature>
<feature type="compositionally biased region" description="Basic and acidic residues" evidence="7">
    <location>
        <begin position="914"/>
        <end position="924"/>
    </location>
</feature>
<feature type="compositionally biased region" description="Basic and acidic residues" evidence="7">
    <location>
        <begin position="961"/>
        <end position="972"/>
    </location>
</feature>
<feature type="compositionally biased region" description="Basic and acidic residues" evidence="7">
    <location>
        <begin position="988"/>
        <end position="1015"/>
    </location>
</feature>
<feature type="compositionally biased region" description="Polar residues" evidence="7">
    <location>
        <begin position="1050"/>
        <end position="1066"/>
    </location>
</feature>
<feature type="compositionally biased region" description="Basic residues" evidence="7">
    <location>
        <begin position="2039"/>
        <end position="2053"/>
    </location>
</feature>
<feature type="compositionally biased region" description="Basic and acidic residues" evidence="7">
    <location>
        <begin position="2088"/>
        <end position="2104"/>
    </location>
</feature>
<feature type="compositionally biased region" description="Polar residues" evidence="7">
    <location>
        <begin position="2131"/>
        <end position="2141"/>
    </location>
</feature>
<feature type="compositionally biased region" description="Polar residues" evidence="7">
    <location>
        <begin position="2152"/>
        <end position="2168"/>
    </location>
</feature>
<feature type="compositionally biased region" description="Low complexity" evidence="7">
    <location>
        <begin position="2276"/>
        <end position="2292"/>
    </location>
</feature>
<feature type="binding site" evidence="5">
    <location>
        <begin position="451"/>
        <end position="458"/>
    </location>
    <ligand>
        <name>ATP</name>
        <dbReference type="ChEBI" id="CHEBI:30616"/>
    </ligand>
</feature>
<feature type="binding site" evidence="3">
    <location>
        <position position="544"/>
    </location>
    <ligand>
        <name>a 1,2-diacyl-sn-glycero-3-phospho-(1D-myo-inositol-4,5-bisphosphate)</name>
        <dbReference type="ChEBI" id="CHEBI:58456"/>
    </ligand>
</feature>
<feature type="binding site" evidence="3">
    <location>
        <position position="584"/>
    </location>
    <ligand>
        <name>a 1,2-diacyl-sn-glycero-3-phospho-(1D-myo-inositol-4,5-bisphosphate)</name>
        <dbReference type="ChEBI" id="CHEBI:58456"/>
    </ligand>
</feature>
<feature type="binding site" evidence="3">
    <location>
        <position position="587"/>
    </location>
    <ligand>
        <name>a 1,2-diacyl-sn-glycero-3-phospho-(1D-myo-inositol-4,5-bisphosphate)</name>
        <dbReference type="ChEBI" id="CHEBI:58456"/>
    </ligand>
</feature>
<feature type="binding site" evidence="12">
    <location>
        <position position="1728"/>
    </location>
    <ligand>
        <name>Ca(2+)</name>
        <dbReference type="ChEBI" id="CHEBI:29108"/>
        <label>2</label>
    </ligand>
</feature>
<feature type="binding site" evidence="12">
    <location>
        <position position="1734"/>
    </location>
    <ligand>
        <name>Ca(2+)</name>
        <dbReference type="ChEBI" id="CHEBI:29108"/>
        <label>2</label>
    </ligand>
</feature>
<feature type="binding site" evidence="12">
    <location>
        <position position="1739"/>
    </location>
    <ligand>
        <name>Ca(2+)</name>
        <dbReference type="ChEBI" id="CHEBI:29108"/>
        <label>2</label>
    </ligand>
</feature>
<feature type="site" description="Calcium ion selectivity and permeability" evidence="2">
    <location>
        <position position="314"/>
    </location>
</feature>
<feature type="site" description="Calcium ion selectivity and permeability" evidence="2">
    <location>
        <position position="663"/>
    </location>
</feature>
<feature type="site" description="Calcium ion selectivity and permeability" evidence="2">
    <location>
        <position position="1358"/>
    </location>
</feature>
<feature type="site" description="Calcium ion selectivity and permeability" evidence="2">
    <location>
        <position position="1646"/>
    </location>
</feature>
<feature type="modified residue" description="Omega-N-methylarginine" evidence="15">
    <location>
        <position position="22"/>
    </location>
</feature>
<feature type="modified residue" description="Phosphoserine" evidence="14">
    <location>
        <position position="411"/>
    </location>
</feature>
<feature type="modified residue" description="Phosphoserine" evidence="14">
    <location>
        <position position="745"/>
    </location>
</feature>
<feature type="modified residue" description="Phosphoserine" evidence="14">
    <location>
        <position position="748"/>
    </location>
</feature>
<feature type="modified residue" description="Phosphoserine" evidence="13 14">
    <location>
        <position position="783"/>
    </location>
</feature>
<feature type="modified residue" description="Phosphoserine" evidence="14">
    <location>
        <position position="1058"/>
    </location>
</feature>
<feature type="modified residue" description="Phosphoserine" evidence="14">
    <location>
        <position position="2056"/>
    </location>
</feature>
<feature type="modified residue" description="Phosphoserine" evidence="14">
    <location>
        <position position="2212"/>
    </location>
</feature>
<feature type="modified residue" description="Phosphoserine" evidence="14">
    <location>
        <position position="2221"/>
    </location>
</feature>
<feature type="modified residue" description="Phosphoserine" evidence="14">
    <location>
        <position position="2244"/>
    </location>
</feature>
<feature type="glycosylation site" description="N-linked (GlcNAc...) asparagine" evidence="3">
    <location>
        <position position="256"/>
    </location>
</feature>
<feature type="glycosylation site" description="N-linked (GlcNAc...) asparagine" evidence="5">
    <location>
        <position position="1554"/>
    </location>
</feature>
<feature type="glycosylation site" description="N-linked (GlcNAc...) asparagine" evidence="5">
    <location>
        <position position="1666"/>
    </location>
</feature>
<feature type="splice variant" id="VSP_000883" description="In isoform NB2." evidence="11">
    <original>A</original>
    <variation>AFVKQTRGTVSRSSSVSSVNSP</variation>
    <location>
        <position position="756"/>
    </location>
</feature>
<feature type="sequence variant" evidence="10">
    <original>D</original>
    <variation>DA</variation>
    <location>
        <position position="414"/>
    </location>
</feature>
<feature type="sequence conflict" description="In Ref. 2; AAB60437." evidence="12" ref="2">
    <original>A</original>
    <variation>G</variation>
    <location>
        <position position="238"/>
    </location>
</feature>
<feature type="sequence conflict" description="In Ref. 2; AAB60437." evidence="12" ref="2">
    <original>N</original>
    <variation>I</variation>
    <location>
        <position position="645"/>
    </location>
</feature>
<feature type="sequence conflict" description="In Ref. 2; AAB60437." evidence="12" ref="2">
    <original>RQQ</original>
    <variation>QE</variation>
    <location>
        <begin position="757"/>
        <end position="759"/>
    </location>
</feature>
<feature type="sequence conflict" description="In Ref. 2; AAB60437." evidence="12" ref="2">
    <original>A</original>
    <variation>P</variation>
    <location>
        <position position="880"/>
    </location>
</feature>
<feature type="sequence conflict" description="In Ref. 2; AAB60437." evidence="12" ref="2">
    <original>L</original>
    <variation>F</variation>
    <location>
        <position position="1128"/>
    </location>
</feature>
<feature type="sequence conflict" description="In Ref. 2; AAB60437." evidence="12" ref="2">
    <original>K</original>
    <variation>E</variation>
    <location>
        <position position="1173"/>
    </location>
</feature>
<feature type="sequence conflict" description="In Ref. 2; AAB60437." evidence="12" ref="2">
    <original>F</original>
    <variation>C</variation>
    <location>
        <position position="1185"/>
    </location>
</feature>
<feature type="sequence conflict" description="In Ref. 2; AAB60437." evidence="12" ref="2">
    <location>
        <begin position="1227"/>
        <end position="1230"/>
    </location>
</feature>
<feature type="sequence conflict" description="In Ref. 2; AAB60437." evidence="12" ref="2">
    <original>F</original>
    <variation>L</variation>
    <location>
        <position position="1388"/>
    </location>
</feature>
<feature type="sequence conflict" description="In Ref. 2; AAB60437." evidence="12" ref="2">
    <original>A</original>
    <variation>AET</variation>
    <location>
        <position position="1549"/>
    </location>
</feature>
<feature type="sequence conflict" description="In Ref. 2; AAB60437." evidence="12" ref="2">
    <original>I</original>
    <variation>S</variation>
    <location>
        <position position="1615"/>
    </location>
</feature>
<feature type="sequence conflict" description="In Ref. 2; AAB60437." evidence="12" ref="2">
    <original>L</original>
    <variation>I</variation>
    <location>
        <position position="1636"/>
    </location>
</feature>
<feature type="sequence conflict" description="In Ref. 2; AAB60437." evidence="12" ref="2">
    <original>G</original>
    <variation>D</variation>
    <location>
        <position position="1657"/>
    </location>
</feature>
<feature type="sequence conflict" description="In Ref. 2; AAB60437." evidence="12" ref="2">
    <location>
        <begin position="1802"/>
        <end position="1837"/>
    </location>
</feature>
<feature type="sequence conflict" description="In Ref. 2; AAB60437." evidence="12" ref="2">
    <original>A</original>
    <variation>G</variation>
    <location>
        <position position="1942"/>
    </location>
</feature>
<feature type="sequence conflict" description="In Ref. 2; AAB60437." evidence="12" ref="2">
    <original>G</original>
    <variation>D</variation>
    <location>
        <position position="1949"/>
    </location>
</feature>
<feature type="sequence conflict" description="In Ref. 2; AAB60437." evidence="12" ref="2">
    <original>A</original>
    <variation>L</variation>
    <location>
        <position position="1963"/>
    </location>
</feature>
<feature type="sequence conflict" description="In Ref. 2; AAB60437." evidence="12" ref="2">
    <original>E</original>
    <variation>D</variation>
    <location>
        <position position="1979"/>
    </location>
</feature>
<feature type="sequence conflict" description="In Ref. 2; AAB60437." evidence="12" ref="2">
    <original>P</original>
    <variation>L</variation>
    <location>
        <position position="1994"/>
    </location>
</feature>
<feature type="sequence conflict" description="In Ref. 2; AAB60437." evidence="12" ref="2">
    <original>H</original>
    <variation>D</variation>
    <location>
        <position position="2021"/>
    </location>
</feature>
<feature type="sequence conflict" description="In Ref. 2; AAB60437." evidence="12" ref="2">
    <original>A</original>
    <variation>AA</variation>
    <location>
        <position position="2075"/>
    </location>
</feature>
<feature type="sequence conflict" description="In Ref. 2; AAB60437." evidence="12" ref="2">
    <original>T</original>
    <variation>A</variation>
    <location>
        <position position="2141"/>
    </location>
</feature>
<feature type="sequence conflict" description="In Ref. 2; AAB60437." evidence="12" ref="2">
    <original>S</original>
    <variation>I</variation>
    <location>
        <position position="2168"/>
    </location>
</feature>
<feature type="sequence conflict" description="In Ref. 2; AAB60437." evidence="12" ref="2">
    <original>S</original>
    <variation>N</variation>
    <location>
        <position position="2309"/>
    </location>
</feature>
<feature type="sequence conflict" description="In Ref. 2; AAB60437." evidence="12" ref="2">
    <original>R</original>
    <variation>G</variation>
    <location>
        <position position="2313"/>
    </location>
</feature>
<feature type="sequence conflict" description="In Ref. 2; AAB60437." evidence="12" ref="2">
    <original>H</original>
    <variation>A</variation>
    <location>
        <position position="2316"/>
    </location>
</feature>
<organism>
    <name type="scientific">Mus musculus</name>
    <name type="common">Mouse</name>
    <dbReference type="NCBI Taxonomy" id="10090"/>
    <lineage>
        <taxon>Eukaryota</taxon>
        <taxon>Metazoa</taxon>
        <taxon>Chordata</taxon>
        <taxon>Craniata</taxon>
        <taxon>Vertebrata</taxon>
        <taxon>Euteleostomi</taxon>
        <taxon>Mammalia</taxon>
        <taxon>Eutheria</taxon>
        <taxon>Euarchontoglires</taxon>
        <taxon>Glires</taxon>
        <taxon>Rodentia</taxon>
        <taxon>Myomorpha</taxon>
        <taxon>Muroidea</taxon>
        <taxon>Muridae</taxon>
        <taxon>Murinae</taxon>
        <taxon>Mus</taxon>
        <taxon>Mus</taxon>
    </lineage>
</organism>